<sequence>MSKRDYYEVLGVARGASDEELKKAYRRCAMKYHPDRNPGDAAAEATFKECKEAYEVLSDGNKRRAYDAHGHAAFEHGMGGGGGGPGGPDMGDIFGDIFGNIFGGGAAGPRAARRGADVGYVLELDLEEAVAGIERRIEIPTLIECEPCHGSGSEDGKVEVCATCHGRGQVRIQRGIFAMQQSCPHCDGRGTLIQNPCKTCHGAGRVEEDKVLSIKVPAGVDTGDRIRLAGEGEAGPAGTPPGDLYVEVRVREHAIFQRDGDDLHCEVPIRISQAALGDTVRVATLGGEAEIRIPAETQTGKLFRLRGKGVRSVRSRSEGDLYCRVVVETPVNLTTDQRELLKQFEATFTGEDARKHSPKSATFIDGVKGFWDRMTS</sequence>
<dbReference type="EMBL" id="AF302775">
    <property type="protein sequence ID" value="AAG53937.1"/>
    <property type="molecule type" value="Genomic_DNA"/>
</dbReference>
<dbReference type="EMBL" id="AE008922">
    <property type="protein sequence ID" value="AAM40771.1"/>
    <property type="molecule type" value="Genomic_DNA"/>
</dbReference>
<dbReference type="RefSeq" id="NP_636847.1">
    <property type="nucleotide sequence ID" value="NC_003902.1"/>
</dbReference>
<dbReference type="RefSeq" id="WP_011036661.1">
    <property type="nucleotide sequence ID" value="NC_003902.1"/>
</dbReference>
<dbReference type="SMR" id="Q8PAK8"/>
<dbReference type="STRING" id="190485.XCC1475"/>
<dbReference type="EnsemblBacteria" id="AAM40771">
    <property type="protein sequence ID" value="AAM40771"/>
    <property type="gene ID" value="XCC1475"/>
</dbReference>
<dbReference type="KEGG" id="xcc:XCC1475"/>
<dbReference type="PATRIC" id="fig|190485.4.peg.1579"/>
<dbReference type="eggNOG" id="COG0484">
    <property type="taxonomic scope" value="Bacteria"/>
</dbReference>
<dbReference type="HOGENOM" id="CLU_017633_0_7_6"/>
<dbReference type="OrthoDB" id="9779889at2"/>
<dbReference type="Proteomes" id="UP000001010">
    <property type="component" value="Chromosome"/>
</dbReference>
<dbReference type="GO" id="GO:0005737">
    <property type="term" value="C:cytoplasm"/>
    <property type="evidence" value="ECO:0000318"/>
    <property type="project" value="GO_Central"/>
</dbReference>
<dbReference type="GO" id="GO:0005524">
    <property type="term" value="F:ATP binding"/>
    <property type="evidence" value="ECO:0007669"/>
    <property type="project" value="InterPro"/>
</dbReference>
<dbReference type="GO" id="GO:0031072">
    <property type="term" value="F:heat shock protein binding"/>
    <property type="evidence" value="ECO:0007669"/>
    <property type="project" value="InterPro"/>
</dbReference>
<dbReference type="GO" id="GO:0051082">
    <property type="term" value="F:unfolded protein binding"/>
    <property type="evidence" value="ECO:0000318"/>
    <property type="project" value="GO_Central"/>
</dbReference>
<dbReference type="GO" id="GO:0008270">
    <property type="term" value="F:zinc ion binding"/>
    <property type="evidence" value="ECO:0007669"/>
    <property type="project" value="UniProtKB-UniRule"/>
</dbReference>
<dbReference type="GO" id="GO:0051085">
    <property type="term" value="P:chaperone cofactor-dependent protein refolding"/>
    <property type="evidence" value="ECO:0000318"/>
    <property type="project" value="GO_Central"/>
</dbReference>
<dbReference type="GO" id="GO:0006260">
    <property type="term" value="P:DNA replication"/>
    <property type="evidence" value="ECO:0007669"/>
    <property type="project" value="UniProtKB-KW"/>
</dbReference>
<dbReference type="GO" id="GO:0042026">
    <property type="term" value="P:protein refolding"/>
    <property type="evidence" value="ECO:0000318"/>
    <property type="project" value="GO_Central"/>
</dbReference>
<dbReference type="GO" id="GO:0009408">
    <property type="term" value="P:response to heat"/>
    <property type="evidence" value="ECO:0007669"/>
    <property type="project" value="InterPro"/>
</dbReference>
<dbReference type="CDD" id="cd06257">
    <property type="entry name" value="DnaJ"/>
    <property type="match status" value="1"/>
</dbReference>
<dbReference type="CDD" id="cd10747">
    <property type="entry name" value="DnaJ_C"/>
    <property type="match status" value="1"/>
</dbReference>
<dbReference type="CDD" id="cd10719">
    <property type="entry name" value="DnaJ_zf"/>
    <property type="match status" value="1"/>
</dbReference>
<dbReference type="FunFam" id="1.10.287.110:FF:000099">
    <property type="entry name" value="Chaperone protein DnaJ"/>
    <property type="match status" value="1"/>
</dbReference>
<dbReference type="FunFam" id="2.10.230.10:FF:000002">
    <property type="entry name" value="Molecular chaperone DnaJ"/>
    <property type="match status" value="1"/>
</dbReference>
<dbReference type="FunFam" id="2.60.260.20:FF:000004">
    <property type="entry name" value="Molecular chaperone DnaJ"/>
    <property type="match status" value="1"/>
</dbReference>
<dbReference type="Gene3D" id="1.10.287.110">
    <property type="entry name" value="DnaJ domain"/>
    <property type="match status" value="1"/>
</dbReference>
<dbReference type="Gene3D" id="2.10.230.10">
    <property type="entry name" value="Heat shock protein DnaJ, cysteine-rich domain"/>
    <property type="match status" value="1"/>
</dbReference>
<dbReference type="Gene3D" id="2.60.260.20">
    <property type="entry name" value="Urease metallochaperone UreE, N-terminal domain"/>
    <property type="match status" value="2"/>
</dbReference>
<dbReference type="HAMAP" id="MF_01152">
    <property type="entry name" value="DnaJ"/>
    <property type="match status" value="1"/>
</dbReference>
<dbReference type="InterPro" id="IPR012724">
    <property type="entry name" value="DnaJ"/>
</dbReference>
<dbReference type="InterPro" id="IPR002939">
    <property type="entry name" value="DnaJ_C"/>
</dbReference>
<dbReference type="InterPro" id="IPR001623">
    <property type="entry name" value="DnaJ_domain"/>
</dbReference>
<dbReference type="InterPro" id="IPR008971">
    <property type="entry name" value="HSP40/DnaJ_pept-bd"/>
</dbReference>
<dbReference type="InterPro" id="IPR001305">
    <property type="entry name" value="HSP_DnaJ_Cys-rich_dom"/>
</dbReference>
<dbReference type="InterPro" id="IPR036410">
    <property type="entry name" value="HSP_DnaJ_Cys-rich_dom_sf"/>
</dbReference>
<dbReference type="InterPro" id="IPR036869">
    <property type="entry name" value="J_dom_sf"/>
</dbReference>
<dbReference type="NCBIfam" id="TIGR02349">
    <property type="entry name" value="DnaJ_bact"/>
    <property type="match status" value="1"/>
</dbReference>
<dbReference type="NCBIfam" id="NF008035">
    <property type="entry name" value="PRK10767.1"/>
    <property type="match status" value="1"/>
</dbReference>
<dbReference type="PANTHER" id="PTHR43096:SF48">
    <property type="entry name" value="CHAPERONE PROTEIN DNAJ"/>
    <property type="match status" value="1"/>
</dbReference>
<dbReference type="PANTHER" id="PTHR43096">
    <property type="entry name" value="DNAJ HOMOLOG 1, MITOCHONDRIAL-RELATED"/>
    <property type="match status" value="1"/>
</dbReference>
<dbReference type="Pfam" id="PF00226">
    <property type="entry name" value="DnaJ"/>
    <property type="match status" value="1"/>
</dbReference>
<dbReference type="Pfam" id="PF01556">
    <property type="entry name" value="DnaJ_C"/>
    <property type="match status" value="1"/>
</dbReference>
<dbReference type="Pfam" id="PF00684">
    <property type="entry name" value="DnaJ_CXXCXGXG"/>
    <property type="match status" value="1"/>
</dbReference>
<dbReference type="PRINTS" id="PR00625">
    <property type="entry name" value="JDOMAIN"/>
</dbReference>
<dbReference type="SMART" id="SM00271">
    <property type="entry name" value="DnaJ"/>
    <property type="match status" value="1"/>
</dbReference>
<dbReference type="SUPFAM" id="SSF46565">
    <property type="entry name" value="Chaperone J-domain"/>
    <property type="match status" value="1"/>
</dbReference>
<dbReference type="SUPFAM" id="SSF57938">
    <property type="entry name" value="DnaJ/Hsp40 cysteine-rich domain"/>
    <property type="match status" value="1"/>
</dbReference>
<dbReference type="SUPFAM" id="SSF49493">
    <property type="entry name" value="HSP40/DnaJ peptide-binding domain"/>
    <property type="match status" value="2"/>
</dbReference>
<dbReference type="PROSITE" id="PS50076">
    <property type="entry name" value="DNAJ_2"/>
    <property type="match status" value="1"/>
</dbReference>
<dbReference type="PROSITE" id="PS51188">
    <property type="entry name" value="ZF_CR"/>
    <property type="match status" value="1"/>
</dbReference>
<accession>Q8PAK8</accession>
<accession>Q9APF2</accession>
<evidence type="ECO:0000255" key="1">
    <source>
        <dbReference type="HAMAP-Rule" id="MF_01152"/>
    </source>
</evidence>
<evidence type="ECO:0000305" key="2"/>
<keyword id="KW-0143">Chaperone</keyword>
<keyword id="KW-0963">Cytoplasm</keyword>
<keyword id="KW-0235">DNA replication</keyword>
<keyword id="KW-0479">Metal-binding</keyword>
<keyword id="KW-1185">Reference proteome</keyword>
<keyword id="KW-0677">Repeat</keyword>
<keyword id="KW-0346">Stress response</keyword>
<keyword id="KW-0862">Zinc</keyword>
<keyword id="KW-0863">Zinc-finger</keyword>
<protein>
    <recommendedName>
        <fullName evidence="1">Chaperone protein DnaJ</fullName>
    </recommendedName>
</protein>
<comment type="function">
    <text evidence="1">Participates actively in the response to hyperosmotic and heat shock by preventing the aggregation of stress-denatured proteins and by disaggregating proteins, also in an autonomous, DnaK-independent fashion. Unfolded proteins bind initially to DnaJ; upon interaction with the DnaJ-bound protein, DnaK hydrolyzes its bound ATP, resulting in the formation of a stable complex. GrpE releases ADP from DnaK; ATP binding to DnaK triggers the release of the substrate protein, thus completing the reaction cycle. Several rounds of ATP-dependent interactions between DnaJ, DnaK and GrpE are required for fully efficient folding. Also involved, together with DnaK and GrpE, in the DNA replication of plasmids through activation of initiation proteins.</text>
</comment>
<comment type="cofactor">
    <cofactor evidence="1">
        <name>Zn(2+)</name>
        <dbReference type="ChEBI" id="CHEBI:29105"/>
    </cofactor>
    <text evidence="1">Binds 2 Zn(2+) ions per monomer.</text>
</comment>
<comment type="subunit">
    <text evidence="1">Homodimer.</text>
</comment>
<comment type="subcellular location">
    <subcellularLocation>
        <location evidence="1">Cytoplasm</location>
    </subcellularLocation>
</comment>
<comment type="domain">
    <text evidence="1">The J domain is necessary and sufficient to stimulate DnaK ATPase activity. Zinc center 1 plays an important role in the autonomous, DnaK-independent chaperone activity of DnaJ. Zinc center 2 is essential for interaction with DnaK and for DnaJ activity.</text>
</comment>
<comment type="similarity">
    <text evidence="1">Belongs to the DnaJ family.</text>
</comment>
<reference key="1">
    <citation type="journal article" date="2001" name="Arch. Microbiol.">
        <title>Characterization of stress-responsive genes, hrcA-grpE-dnaK-dnaJ, from phytopathogenic Xanthomonas campestris.</title>
        <authorList>
            <person name="Weng S.-F."/>
            <person name="Tai P.-M."/>
            <person name="Yang C.-H."/>
            <person name="Wu C.-D."/>
            <person name="Tsai W.-J."/>
            <person name="Lin J.-W."/>
            <person name="Tseng Y.-H."/>
        </authorList>
    </citation>
    <scope>NUCLEOTIDE SEQUENCE [GENOMIC DNA]</scope>
</reference>
<reference key="2">
    <citation type="journal article" date="2002" name="Nature">
        <title>Comparison of the genomes of two Xanthomonas pathogens with differing host specificities.</title>
        <authorList>
            <person name="da Silva A.C.R."/>
            <person name="Ferro J.A."/>
            <person name="Reinach F.C."/>
            <person name="Farah C.S."/>
            <person name="Furlan L.R."/>
            <person name="Quaggio R.B."/>
            <person name="Monteiro-Vitorello C.B."/>
            <person name="Van Sluys M.A."/>
            <person name="Almeida N.F. Jr."/>
            <person name="Alves L.M.C."/>
            <person name="do Amaral A.M."/>
            <person name="Bertolini M.C."/>
            <person name="Camargo L.E.A."/>
            <person name="Camarotte G."/>
            <person name="Cannavan F."/>
            <person name="Cardozo J."/>
            <person name="Chambergo F."/>
            <person name="Ciapina L.P."/>
            <person name="Cicarelli R.M.B."/>
            <person name="Coutinho L.L."/>
            <person name="Cursino-Santos J.R."/>
            <person name="El-Dorry H."/>
            <person name="Faria J.B."/>
            <person name="Ferreira A.J.S."/>
            <person name="Ferreira R.C.C."/>
            <person name="Ferro M.I.T."/>
            <person name="Formighieri E.F."/>
            <person name="Franco M.C."/>
            <person name="Greggio C.C."/>
            <person name="Gruber A."/>
            <person name="Katsuyama A.M."/>
            <person name="Kishi L.T."/>
            <person name="Leite R.P."/>
            <person name="Lemos E.G.M."/>
            <person name="Lemos M.V.F."/>
            <person name="Locali E.C."/>
            <person name="Machado M.A."/>
            <person name="Madeira A.M.B.N."/>
            <person name="Martinez-Rossi N.M."/>
            <person name="Martins E.C."/>
            <person name="Meidanis J."/>
            <person name="Menck C.F.M."/>
            <person name="Miyaki C.Y."/>
            <person name="Moon D.H."/>
            <person name="Moreira L.M."/>
            <person name="Novo M.T.M."/>
            <person name="Okura V.K."/>
            <person name="Oliveira M.C."/>
            <person name="Oliveira V.R."/>
            <person name="Pereira H.A."/>
            <person name="Rossi A."/>
            <person name="Sena J.A.D."/>
            <person name="Silva C."/>
            <person name="de Souza R.F."/>
            <person name="Spinola L.A.F."/>
            <person name="Takita M.A."/>
            <person name="Tamura R.E."/>
            <person name="Teixeira E.C."/>
            <person name="Tezza R.I.D."/>
            <person name="Trindade dos Santos M."/>
            <person name="Truffi D."/>
            <person name="Tsai S.M."/>
            <person name="White F.F."/>
            <person name="Setubal J.C."/>
            <person name="Kitajima J.P."/>
        </authorList>
    </citation>
    <scope>NUCLEOTIDE SEQUENCE [LARGE SCALE GENOMIC DNA]</scope>
    <source>
        <strain>ATCC 33913 / DSM 3586 / NCPPB 528 / LMG 568 / P 25</strain>
    </source>
</reference>
<organism>
    <name type="scientific">Xanthomonas campestris pv. campestris (strain ATCC 33913 / DSM 3586 / NCPPB 528 / LMG 568 / P 25)</name>
    <dbReference type="NCBI Taxonomy" id="190485"/>
    <lineage>
        <taxon>Bacteria</taxon>
        <taxon>Pseudomonadati</taxon>
        <taxon>Pseudomonadota</taxon>
        <taxon>Gammaproteobacteria</taxon>
        <taxon>Lysobacterales</taxon>
        <taxon>Lysobacteraceae</taxon>
        <taxon>Xanthomonas</taxon>
    </lineage>
</organism>
<feature type="chain" id="PRO_0000070938" description="Chaperone protein DnaJ">
    <location>
        <begin position="1"/>
        <end position="376"/>
    </location>
</feature>
<feature type="domain" description="J" evidence="1">
    <location>
        <begin position="5"/>
        <end position="70"/>
    </location>
</feature>
<feature type="repeat" description="CXXCXGXG motif">
    <location>
        <begin position="145"/>
        <end position="152"/>
    </location>
</feature>
<feature type="repeat" description="CXXCXGXG motif">
    <location>
        <begin position="161"/>
        <end position="168"/>
    </location>
</feature>
<feature type="repeat" description="CXXCXGXG motif">
    <location>
        <begin position="183"/>
        <end position="190"/>
    </location>
</feature>
<feature type="repeat" description="CXXCXGXG motif">
    <location>
        <begin position="197"/>
        <end position="204"/>
    </location>
</feature>
<feature type="zinc finger region" description="CR-type" evidence="1">
    <location>
        <begin position="132"/>
        <end position="209"/>
    </location>
</feature>
<feature type="binding site" evidence="1">
    <location>
        <position position="145"/>
    </location>
    <ligand>
        <name>Zn(2+)</name>
        <dbReference type="ChEBI" id="CHEBI:29105"/>
        <label>1</label>
    </ligand>
</feature>
<feature type="binding site" evidence="1">
    <location>
        <position position="148"/>
    </location>
    <ligand>
        <name>Zn(2+)</name>
        <dbReference type="ChEBI" id="CHEBI:29105"/>
        <label>1</label>
    </ligand>
</feature>
<feature type="binding site" evidence="1">
    <location>
        <position position="161"/>
    </location>
    <ligand>
        <name>Zn(2+)</name>
        <dbReference type="ChEBI" id="CHEBI:29105"/>
        <label>2</label>
    </ligand>
</feature>
<feature type="binding site" evidence="1">
    <location>
        <position position="164"/>
    </location>
    <ligand>
        <name>Zn(2+)</name>
        <dbReference type="ChEBI" id="CHEBI:29105"/>
        <label>2</label>
    </ligand>
</feature>
<feature type="binding site" evidence="1">
    <location>
        <position position="183"/>
    </location>
    <ligand>
        <name>Zn(2+)</name>
        <dbReference type="ChEBI" id="CHEBI:29105"/>
        <label>2</label>
    </ligand>
</feature>
<feature type="binding site" evidence="1">
    <location>
        <position position="186"/>
    </location>
    <ligand>
        <name>Zn(2+)</name>
        <dbReference type="ChEBI" id="CHEBI:29105"/>
        <label>2</label>
    </ligand>
</feature>
<feature type="binding site" evidence="1">
    <location>
        <position position="197"/>
    </location>
    <ligand>
        <name>Zn(2+)</name>
        <dbReference type="ChEBI" id="CHEBI:29105"/>
        <label>1</label>
    </ligand>
</feature>
<feature type="binding site" evidence="1">
    <location>
        <position position="200"/>
    </location>
    <ligand>
        <name>Zn(2+)</name>
        <dbReference type="ChEBI" id="CHEBI:29105"/>
        <label>1</label>
    </ligand>
</feature>
<feature type="sequence conflict" description="In Ref. 1; AAG53937." evidence="2" ref="1">
    <original>T</original>
    <variation>A</variation>
    <location>
        <position position="335"/>
    </location>
</feature>
<gene>
    <name evidence="1" type="primary">dnaJ</name>
    <name type="ordered locus">XCC1475</name>
</gene>
<name>DNAJ_XANCP</name>
<proteinExistence type="inferred from homology"/>